<dbReference type="EC" id="5.2.1.8"/>
<dbReference type="EMBL" id="AJ719632">
    <property type="protein sequence ID" value="CAG31291.1"/>
    <property type="molecule type" value="mRNA"/>
</dbReference>
<dbReference type="RefSeq" id="NP_001008475.1">
    <property type="nucleotide sequence ID" value="NM_001008475.2"/>
</dbReference>
<dbReference type="RefSeq" id="XP_040559355.1">
    <property type="nucleotide sequence ID" value="XM_040703421.2"/>
</dbReference>
<dbReference type="RefSeq" id="XP_046777298.1">
    <property type="nucleotide sequence ID" value="XM_046921342.1"/>
</dbReference>
<dbReference type="SMR" id="Q5ZLV2"/>
<dbReference type="FunCoup" id="Q5ZLV2">
    <property type="interactions" value="2043"/>
</dbReference>
<dbReference type="STRING" id="9031.ENSGALP00000070689"/>
<dbReference type="PaxDb" id="9031-ENSGALP00000013375"/>
<dbReference type="Ensembl" id="ENSGALT00010060561.1">
    <property type="protein sequence ID" value="ENSGALP00010037320.1"/>
    <property type="gene ID" value="ENSGALG00010024807.1"/>
</dbReference>
<dbReference type="GeneID" id="424075"/>
<dbReference type="KEGG" id="gga:424075"/>
<dbReference type="CTD" id="53938"/>
<dbReference type="VEuPathDB" id="HostDB:geneid_424075"/>
<dbReference type="eggNOG" id="KOG0884">
    <property type="taxonomic scope" value="Eukaryota"/>
</dbReference>
<dbReference type="GeneTree" id="ENSGT00940000153189"/>
<dbReference type="HOGENOM" id="CLU_012062_16_3_1"/>
<dbReference type="InParanoid" id="Q5ZLV2"/>
<dbReference type="OMA" id="VPFHRVM"/>
<dbReference type="OrthoDB" id="271386at2759"/>
<dbReference type="PhylomeDB" id="Q5ZLV2"/>
<dbReference type="TreeFam" id="TF352224"/>
<dbReference type="Reactome" id="R-GGA-72163">
    <property type="pathway name" value="mRNA Splicing - Major Pathway"/>
</dbReference>
<dbReference type="PRO" id="PR:Q5ZLV2"/>
<dbReference type="Proteomes" id="UP000000539">
    <property type="component" value="Chromosome 7"/>
</dbReference>
<dbReference type="Bgee" id="ENSGALG00000008228">
    <property type="expression patterns" value="Expressed in lung and 13 other cell types or tissues"/>
</dbReference>
<dbReference type="GO" id="GO:0071013">
    <property type="term" value="C:catalytic step 2 spliceosome"/>
    <property type="evidence" value="ECO:0000318"/>
    <property type="project" value="GO_Central"/>
</dbReference>
<dbReference type="GO" id="GO:0003755">
    <property type="term" value="F:peptidyl-prolyl cis-trans isomerase activity"/>
    <property type="evidence" value="ECO:0000318"/>
    <property type="project" value="GO_Central"/>
</dbReference>
<dbReference type="GO" id="GO:0006457">
    <property type="term" value="P:protein folding"/>
    <property type="evidence" value="ECO:0000318"/>
    <property type="project" value="GO_Central"/>
</dbReference>
<dbReference type="CDD" id="cd01928">
    <property type="entry name" value="Cyclophilin_PPIL3_like"/>
    <property type="match status" value="1"/>
</dbReference>
<dbReference type="FunFam" id="2.40.100.10:FF:000012">
    <property type="entry name" value="Peptidyl-prolyl cis-trans isomerase"/>
    <property type="match status" value="1"/>
</dbReference>
<dbReference type="Gene3D" id="2.40.100.10">
    <property type="entry name" value="Cyclophilin-like"/>
    <property type="match status" value="1"/>
</dbReference>
<dbReference type="InterPro" id="IPR029000">
    <property type="entry name" value="Cyclophilin-like_dom_sf"/>
</dbReference>
<dbReference type="InterPro" id="IPR024936">
    <property type="entry name" value="Cyclophilin-type_PPIase"/>
</dbReference>
<dbReference type="InterPro" id="IPR020892">
    <property type="entry name" value="Cyclophilin-type_PPIase_CS"/>
</dbReference>
<dbReference type="InterPro" id="IPR002130">
    <property type="entry name" value="Cyclophilin-type_PPIase_dom"/>
</dbReference>
<dbReference type="InterPro" id="IPR044666">
    <property type="entry name" value="Cyclophilin_A-like"/>
</dbReference>
<dbReference type="PANTHER" id="PTHR45625:SF2">
    <property type="entry name" value="PEPTIDYL-PROLYL CIS-TRANS ISOMERASE-LIKE 3"/>
    <property type="match status" value="1"/>
</dbReference>
<dbReference type="PANTHER" id="PTHR45625">
    <property type="entry name" value="PEPTIDYL-PROLYL CIS-TRANS ISOMERASE-RELATED"/>
    <property type="match status" value="1"/>
</dbReference>
<dbReference type="Pfam" id="PF00160">
    <property type="entry name" value="Pro_isomerase"/>
    <property type="match status" value="1"/>
</dbReference>
<dbReference type="PIRSF" id="PIRSF001467">
    <property type="entry name" value="Peptidylpro_ismrse"/>
    <property type="match status" value="1"/>
</dbReference>
<dbReference type="PRINTS" id="PR00153">
    <property type="entry name" value="CSAPPISMRASE"/>
</dbReference>
<dbReference type="SUPFAM" id="SSF50891">
    <property type="entry name" value="Cyclophilin-like"/>
    <property type="match status" value="1"/>
</dbReference>
<dbReference type="PROSITE" id="PS00170">
    <property type="entry name" value="CSA_PPIASE_1"/>
    <property type="match status" value="1"/>
</dbReference>
<dbReference type="PROSITE" id="PS50072">
    <property type="entry name" value="CSA_PPIASE_2"/>
    <property type="match status" value="1"/>
</dbReference>
<gene>
    <name type="primary">PPIL3</name>
    <name type="ORF">RCJMB04_4l15</name>
</gene>
<proteinExistence type="evidence at transcript level"/>
<accession>Q5ZLV2</accession>
<comment type="function">
    <text>PPIases accelerate the folding of proteins. It catalyzes the cis-trans isomerization of proline imidic peptide bonds in oligopeptides.</text>
</comment>
<comment type="catalytic activity">
    <reaction>
        <text>[protein]-peptidylproline (omega=180) = [protein]-peptidylproline (omega=0)</text>
        <dbReference type="Rhea" id="RHEA:16237"/>
        <dbReference type="Rhea" id="RHEA-COMP:10747"/>
        <dbReference type="Rhea" id="RHEA-COMP:10748"/>
        <dbReference type="ChEBI" id="CHEBI:83833"/>
        <dbReference type="ChEBI" id="CHEBI:83834"/>
        <dbReference type="EC" id="5.2.1.8"/>
    </reaction>
</comment>
<comment type="similarity">
    <text evidence="2">Belongs to the cyclophilin-type PPIase family. PPIL3 subfamily.</text>
</comment>
<name>PPIL3_CHICK</name>
<reference key="1">
    <citation type="journal article" date="2005" name="Genome Biol.">
        <title>Full-length cDNAs from chicken bursal lymphocytes to facilitate gene function analysis.</title>
        <authorList>
            <person name="Caldwell R.B."/>
            <person name="Kierzek A.M."/>
            <person name="Arakawa H."/>
            <person name="Bezzubov Y."/>
            <person name="Zaim J."/>
            <person name="Fiedler P."/>
            <person name="Kutter S."/>
            <person name="Blagodatski A."/>
            <person name="Kostovska D."/>
            <person name="Koter M."/>
            <person name="Plachy J."/>
            <person name="Carninci P."/>
            <person name="Hayashizaki Y."/>
            <person name="Buerstedde J.-M."/>
        </authorList>
    </citation>
    <scope>NUCLEOTIDE SEQUENCE [LARGE SCALE MRNA]</scope>
    <source>
        <strain>CB</strain>
        <tissue>Bursa of Fabricius</tissue>
    </source>
</reference>
<feature type="chain" id="PRO_0000064169" description="Peptidyl-prolyl cis-trans isomerase-like 3">
    <location>
        <begin position="1"/>
        <end position="161"/>
    </location>
</feature>
<feature type="domain" description="PPIase cyclophilin-type" evidence="1">
    <location>
        <begin position="1"/>
        <end position="154"/>
    </location>
</feature>
<sequence length="161" mass="18052">MAVTLHTDVGDIKIELFCERTPKTCENFLALCASNYYNGCVFHRNIKGFMVQTGDPLGTGKGGTSIWGKKFEDEFSEYLKHSVRGVVSMANNGPNTNGSQFFITYGKQPHLDMKYTVFGKVIDGLETLDELEKLPVNEKTYRPLNDVHIKDITIHANPFAL</sequence>
<organism>
    <name type="scientific">Gallus gallus</name>
    <name type="common">Chicken</name>
    <dbReference type="NCBI Taxonomy" id="9031"/>
    <lineage>
        <taxon>Eukaryota</taxon>
        <taxon>Metazoa</taxon>
        <taxon>Chordata</taxon>
        <taxon>Craniata</taxon>
        <taxon>Vertebrata</taxon>
        <taxon>Euteleostomi</taxon>
        <taxon>Archelosauria</taxon>
        <taxon>Archosauria</taxon>
        <taxon>Dinosauria</taxon>
        <taxon>Saurischia</taxon>
        <taxon>Theropoda</taxon>
        <taxon>Coelurosauria</taxon>
        <taxon>Aves</taxon>
        <taxon>Neognathae</taxon>
        <taxon>Galloanserae</taxon>
        <taxon>Galliformes</taxon>
        <taxon>Phasianidae</taxon>
        <taxon>Phasianinae</taxon>
        <taxon>Gallus</taxon>
    </lineage>
</organism>
<keyword id="KW-0413">Isomerase</keyword>
<keyword id="KW-1185">Reference proteome</keyword>
<keyword id="KW-0697">Rotamase</keyword>
<evidence type="ECO:0000255" key="1">
    <source>
        <dbReference type="PROSITE-ProRule" id="PRU00156"/>
    </source>
</evidence>
<evidence type="ECO:0000305" key="2"/>
<protein>
    <recommendedName>
        <fullName>Peptidyl-prolyl cis-trans isomerase-like 3</fullName>
        <shortName>PPIase</shortName>
        <ecNumber>5.2.1.8</ecNumber>
    </recommendedName>
    <alternativeName>
        <fullName>Cyclophilin-like protein PPIL3</fullName>
    </alternativeName>
    <alternativeName>
        <fullName>Rotamase PPIL3</fullName>
    </alternativeName>
</protein>